<sequence length="660" mass="75392">MLCKRTLSEISSLYTASKKKKTVIDTLSYTYPDVLLSCNERYQITHPELGIVHASNLYCSSLESFCLQYRDYGNDLSIRSCEKLVFSDALITGLSRIKFTPWPECRTRYETTVSELRRLHDMDNFTEASGFLEDLKRWLCSQNVFLEPFQKNCILHVICFLVATRTPHHYHYIFEYIKRLFNIENINTSVLDTFKHKTTVFLVPRRHGKTWILTPIITFLIKNFSNISVGYVAHQKHVSQHVMKEVEILCRREIPYVVENKDNVISVIRTNSRSCALFASCFNTNSIRGQSFNILLVDESNFIKKEALHAIIGFLAQSTAKIIFISSCNTSTQSTSFLAHVKKTPTQILNVISYVCEEHLYSFGERSEAITCPCYRLHKPTFISLNLNIKKTANAFLKDSFNEEILGTTNTSFLANPILTDSSVNEFDMIRYSTVNKQLQEHLADTLFVYVDPAFTTNRRASGTGVAGVGRYNNQFIVYGIEHFYLKSLADTSEDSIGECVAFMISGIIKIHPFFTMVRVLIEGNSSQAASVKIAYCIKAHLSDSACILQFYQTLDQNGFEQPFFLLKKNKRAAVEHFVSKFNSNLIKASQEIISHTIKLNFDPIEYLLLQIKNISQIVTTESVEYTTRKTKDSSDDALVAVIMAIYFCNDQEVALYKCI</sequence>
<keyword id="KW-0238">DNA-binding</keyword>
<keyword id="KW-1048">Host nucleus</keyword>
<keyword id="KW-0378">Hydrolase</keyword>
<keyword id="KW-0231">Viral genome packaging</keyword>
<keyword id="KW-1188">Viral release from host cell</keyword>
<dbReference type="EC" id="3.1.-.-" evidence="1"/>
<dbReference type="EMBL" id="AF322977">
    <property type="protein sequence ID" value="ABG36582.1"/>
    <property type="molecule type" value="Genomic_DNA"/>
</dbReference>
<dbReference type="SMR" id="Q18LD7"/>
<dbReference type="GO" id="GO:0042025">
    <property type="term" value="C:host cell nucleus"/>
    <property type="evidence" value="ECO:0007669"/>
    <property type="project" value="UniProtKB-SubCell"/>
</dbReference>
<dbReference type="GO" id="GO:0003677">
    <property type="term" value="F:DNA binding"/>
    <property type="evidence" value="ECO:0007669"/>
    <property type="project" value="UniProtKB-KW"/>
</dbReference>
<dbReference type="GO" id="GO:0016787">
    <property type="term" value="F:hydrolase activity"/>
    <property type="evidence" value="ECO:0007669"/>
    <property type="project" value="UniProtKB-KW"/>
</dbReference>
<dbReference type="GO" id="GO:0051276">
    <property type="term" value="P:chromosome organization"/>
    <property type="evidence" value="ECO:0007669"/>
    <property type="project" value="InterPro"/>
</dbReference>
<dbReference type="Gene3D" id="3.30.420.320">
    <property type="match status" value="1"/>
</dbReference>
<dbReference type="Gene3D" id="3.40.50.300">
    <property type="entry name" value="P-loop containing nucleotide triphosphate hydrolases"/>
    <property type="match status" value="1"/>
</dbReference>
<dbReference type="HAMAP" id="MF_04013">
    <property type="entry name" value="HSV_TRM3"/>
    <property type="match status" value="1"/>
</dbReference>
<dbReference type="InterPro" id="IPR003498">
    <property type="entry name" value="DNA_pack_C"/>
</dbReference>
<dbReference type="InterPro" id="IPR038435">
    <property type="entry name" value="DNA_pack_C_sf"/>
</dbReference>
<dbReference type="InterPro" id="IPR003499">
    <property type="entry name" value="DNA_pack_N"/>
</dbReference>
<dbReference type="InterPro" id="IPR033663">
    <property type="entry name" value="HSV_TRM3"/>
</dbReference>
<dbReference type="InterPro" id="IPR027417">
    <property type="entry name" value="P-loop_NTPase"/>
</dbReference>
<dbReference type="Pfam" id="PF02499">
    <property type="entry name" value="DNA_pack_C"/>
    <property type="match status" value="1"/>
</dbReference>
<dbReference type="Pfam" id="PF02500">
    <property type="entry name" value="DNA_pack_N"/>
    <property type="match status" value="1"/>
</dbReference>
<comment type="function">
    <text evidence="1">Component of the molecular motor that translocates viral genomic DNA in empty capsid during DNA packaging. Forms a tripartite terminase complex together with TRM1 and TRM2 in the host cytoplasm. Once the complex reaches the host nucleus, it interacts with the capsid portal vertex. This portal forms a ring in which genomic DNA is translocated into the capsid. TRM3 carries an RNase H-like nuclease activity that plays an important role for the cleavage of concatemeric viral DNA into unit length genomes.</text>
</comment>
<comment type="subunit">
    <text evidence="1">Interacts with the terminase subunits TRM1 and TRM2. Interacts with portal protein.</text>
</comment>
<comment type="subcellular location">
    <subcellularLocation>
        <location evidence="1">Host nucleus</location>
    </subcellularLocation>
    <text evidence="1">Responsible for the nuclear localization of the two others subunits TRM1 and TRM2.</text>
</comment>
<comment type="similarity">
    <text evidence="1">Belongs to the herpesviridae TRM3 protein family.</text>
</comment>
<protein>
    <recommendedName>
        <fullName evidence="1">Tripartite terminase subunit 3</fullName>
        <ecNumber evidence="1">3.1.-.-</ecNumber>
    </recommendedName>
    <alternativeName>
        <fullName evidence="1">Terminase large subunit</fullName>
    </alternativeName>
</protein>
<proteinExistence type="inferred from homology"/>
<name>TRM3_ELHVK</name>
<gene>
    <name evidence="1" type="primary">TRM3</name>
</gene>
<accession>Q18LD7</accession>
<organismHost>
    <name type="scientific">Elephas maximus</name>
    <name type="common">Indian elephant</name>
    <dbReference type="NCBI Taxonomy" id="9783"/>
</organismHost>
<organismHost>
    <name type="scientific">Loxodonta africana</name>
    <name type="common">African elephant</name>
    <dbReference type="NCBI Taxonomy" id="9785"/>
</organismHost>
<organismHost>
    <name type="scientific">Loxodonta cyclotis</name>
    <name type="common">African forest elephant</name>
    <dbReference type="NCBI Taxonomy" id="99490"/>
</organismHost>
<organism>
    <name type="scientific">Elephantid herpesvirus 1 (isolate Asian elephant/Berlin/Kiba/1998)</name>
    <name type="common">EIHV-1</name>
    <name type="synonym">Elephant endotheliotropic herpesvirus</name>
    <dbReference type="NCBI Taxonomy" id="654902"/>
    <lineage>
        <taxon>Viruses</taxon>
        <taxon>Duplodnaviria</taxon>
        <taxon>Heunggongvirae</taxon>
        <taxon>Peploviricota</taxon>
        <taxon>Herviviricetes</taxon>
        <taxon>Herpesvirales</taxon>
        <taxon>Orthoherpesviridae</taxon>
        <taxon>Betaherpesvirinae</taxon>
        <taxon>Proboscivirus</taxon>
        <taxon>Proboscivirus elephantidbeta1</taxon>
        <taxon>Elephantid herpesvirus 1</taxon>
    </lineage>
</organism>
<feature type="chain" id="PRO_0000408162" description="Tripartite terminase subunit 3">
    <location>
        <begin position="1"/>
        <end position="660"/>
    </location>
</feature>
<feature type="short sequence motif" description="Walker A motif" evidence="1">
    <location>
        <begin position="203"/>
        <end position="210"/>
    </location>
</feature>
<feature type="short sequence motif" description="Walker B motif" evidence="1">
    <location>
        <begin position="294"/>
        <end position="299"/>
    </location>
</feature>
<feature type="active site" description="For ATPase activity" evidence="1">
    <location>
        <position position="299"/>
    </location>
</feature>
<feature type="active site" description="For nuclease activity" evidence="1">
    <location>
        <position position="452"/>
    </location>
</feature>
<feature type="active site" description="For nuclease activity" evidence="1">
    <location>
        <position position="523"/>
    </location>
</feature>
<feature type="active site" description="For nuclease activity" evidence="1">
    <location>
        <position position="637"/>
    </location>
</feature>
<reference key="1">
    <citation type="journal article" date="2007" name="J. Virol.">
        <title>Identification of novel rodent herpesviruses, including the first gammaherpesvirus of Mus musculus.</title>
        <authorList>
            <person name="Ehlers B."/>
            <person name="Kuchler J."/>
            <person name="Yasmum N."/>
            <person name="Dural G."/>
            <person name="Voigt S."/>
            <person name="Schmidt-Chanasit J."/>
            <person name="Jakel T."/>
            <person name="Matuschka F.R."/>
            <person name="Richter D."/>
            <person name="Essbauer S."/>
            <person name="Hughes D.J."/>
            <person name="Summers C."/>
            <person name="Bennett M."/>
            <person name="Stewart J.P."/>
            <person name="Ulrich R.G."/>
        </authorList>
    </citation>
    <scope>NUCLEOTIDE SEQUENCE [GENOMIC DNA]</scope>
</reference>
<reference key="2">
    <citation type="journal article" date="2001" name="J. Gen. Virol.">
        <title>Genetic and ultrastructural characterization of a European isolate of the fatal endotheliotropic elephant herpesvirus.</title>
        <authorList>
            <person name="Ehlers B."/>
            <person name="Burkhardt S."/>
            <person name="Goltz M."/>
            <person name="Bergmann V."/>
            <person name="Ochs A."/>
            <person name="Weiler H."/>
            <person name="Hentschke J."/>
        </authorList>
    </citation>
    <scope>NUCLEOTIDE SEQUENCE [GENOMIC DNA]</scope>
</reference>
<evidence type="ECO:0000255" key="1">
    <source>
        <dbReference type="HAMAP-Rule" id="MF_04013"/>
    </source>
</evidence>